<evidence type="ECO:0000250" key="1"/>
<evidence type="ECO:0000250" key="2">
    <source>
        <dbReference type="UniProtKB" id="Q61029"/>
    </source>
</evidence>
<evidence type="ECO:0000255" key="3"/>
<evidence type="ECO:0000255" key="4">
    <source>
        <dbReference type="PROSITE-ProRule" id="PRU00313"/>
    </source>
</evidence>
<evidence type="ECO:0000255" key="5">
    <source>
        <dbReference type="PROSITE-ProRule" id="PRU00314"/>
    </source>
</evidence>
<evidence type="ECO:0000256" key="6">
    <source>
        <dbReference type="SAM" id="MobiDB-lite"/>
    </source>
</evidence>
<evidence type="ECO:0000305" key="7"/>
<evidence type="ECO:0007744" key="8">
    <source>
    </source>
</evidence>
<name>LAP2_RAT</name>
<sequence length="452" mass="50278">MPEFLEDPSVLTKDKLKSELVANNVTLPAGEQRKDVYVQLYLQHLTARNRPPLAAGANSKGPPDFSSDEEREPTPVLGSGASVGRGRGAVGRKATKKTDKPRPEDKDDLDVTELSNEELLEQLVRYGVNPGPIVGTTRKLYEKKLLKLREQGAESRSSTPLPTVSSSAENTRQNGSNDSDRYSDNDEDSKIELKLEKREPLKGRAKTPVTLKQRRIEHNQSYSEAGVTETEWTSGSSKGGPLQALTRESTRGSRRTPRRRVEPSQHFRVDGAVISESTPIAETIKASSNDSLVANRLTGNFKHASSILPITEFSDITRRTPKKPLTRAEVGEKTEERRVERDILKEMFPYEASTPTGISASCRRPIKGAAGRPLELSDFRMEESFSSKYVPKYVPLADVKSEKTKKGRSVPMWIKMLLFALVAGFLFLVYQAMETNQGNPFTNFLQDTKISN</sequence>
<gene>
    <name type="primary">Tmpo</name>
    <name type="synonym">Lap2</name>
</gene>
<proteinExistence type="evidence at protein level"/>
<reference key="1">
    <citation type="journal article" date="1995" name="EMBO J.">
        <title>Cloning of a cDNA for lamina-associated polypeptide 2 (LAP2) and identification of regions that specify targeting to the nuclear envelope.</title>
        <authorList>
            <person name="Furukawa K."/>
            <person name="Pante N."/>
            <person name="Aebi U."/>
            <person name="Gerace L."/>
        </authorList>
    </citation>
    <scope>NUCLEOTIDE SEQUENCE [MRNA]</scope>
    <scope>PROTEIN SEQUENCE OF 158-172; 270-284 AND 347-361</scope>
    <source>
        <tissue>Liver</tissue>
    </source>
</reference>
<reference key="2">
    <citation type="journal article" date="2012" name="Nat. Commun.">
        <title>Quantitative maps of protein phosphorylation sites across 14 different rat organs and tissues.</title>
        <authorList>
            <person name="Lundby A."/>
            <person name="Secher A."/>
            <person name="Lage K."/>
            <person name="Nordsborg N.B."/>
            <person name="Dmytriyev A."/>
            <person name="Lundby C."/>
            <person name="Olsen J.V."/>
        </authorList>
    </citation>
    <scope>PHOSPHORYLATION [LARGE SCALE ANALYSIS] AT SER-66; SER-67; THR-74; SER-155; THR-159; SER-167 AND SER-183</scope>
    <scope>IDENTIFICATION BY MASS SPECTROMETRY [LARGE SCALE ANALYSIS]</scope>
</reference>
<organism>
    <name type="scientific">Rattus norvegicus</name>
    <name type="common">Rat</name>
    <dbReference type="NCBI Taxonomy" id="10116"/>
    <lineage>
        <taxon>Eukaryota</taxon>
        <taxon>Metazoa</taxon>
        <taxon>Chordata</taxon>
        <taxon>Craniata</taxon>
        <taxon>Vertebrata</taxon>
        <taxon>Euteleostomi</taxon>
        <taxon>Mammalia</taxon>
        <taxon>Eutheria</taxon>
        <taxon>Euarchontoglires</taxon>
        <taxon>Glires</taxon>
        <taxon>Rodentia</taxon>
        <taxon>Myomorpha</taxon>
        <taxon>Muroidea</taxon>
        <taxon>Muridae</taxon>
        <taxon>Murinae</taxon>
        <taxon>Rattus</taxon>
    </lineage>
</organism>
<dbReference type="EMBL" id="U18314">
    <property type="protein sequence ID" value="AAC52209.1"/>
    <property type="molecule type" value="mRNA"/>
</dbReference>
<dbReference type="PIR" id="S55255">
    <property type="entry name" value="S55255"/>
</dbReference>
<dbReference type="RefSeq" id="NP_037019.1">
    <property type="nucleotide sequence ID" value="NM_012887.2"/>
</dbReference>
<dbReference type="SMR" id="Q62733"/>
<dbReference type="BioGRID" id="247398">
    <property type="interactions" value="2"/>
</dbReference>
<dbReference type="FunCoup" id="Q62733">
    <property type="interactions" value="261"/>
</dbReference>
<dbReference type="STRING" id="10116.ENSRNOP00000012715"/>
<dbReference type="GlyGen" id="Q62733">
    <property type="glycosylation" value="1 site"/>
</dbReference>
<dbReference type="iPTMnet" id="Q62733"/>
<dbReference type="PhosphoSitePlus" id="Q62733"/>
<dbReference type="jPOST" id="Q62733"/>
<dbReference type="PaxDb" id="10116-ENSRNOP00000012715"/>
<dbReference type="Ensembl" id="ENSRNOT00000012715.5">
    <property type="protein sequence ID" value="ENSRNOP00000012715.4"/>
    <property type="gene ID" value="ENSRNOG00000008797.8"/>
</dbReference>
<dbReference type="GeneID" id="25359"/>
<dbReference type="UCSC" id="RGD:3875">
    <property type="organism name" value="rat"/>
</dbReference>
<dbReference type="AGR" id="RGD:3875"/>
<dbReference type="CTD" id="7112"/>
<dbReference type="RGD" id="3875">
    <property type="gene designation" value="Tmpo"/>
</dbReference>
<dbReference type="eggNOG" id="ENOG502QWCI">
    <property type="taxonomic scope" value="Eukaryota"/>
</dbReference>
<dbReference type="GeneTree" id="ENSGT00390000008708"/>
<dbReference type="HOGENOM" id="CLU_032534_1_0_1"/>
<dbReference type="InParanoid" id="Q62733"/>
<dbReference type="PhylomeDB" id="Q62733"/>
<dbReference type="Proteomes" id="UP000002494">
    <property type="component" value="Chromosome 7"/>
</dbReference>
<dbReference type="Bgee" id="ENSRNOG00000008797">
    <property type="expression patterns" value="Expressed in thymus and 20 other cell types or tissues"/>
</dbReference>
<dbReference type="GO" id="GO:0000785">
    <property type="term" value="C:chromatin"/>
    <property type="evidence" value="ECO:0000266"/>
    <property type="project" value="RGD"/>
</dbReference>
<dbReference type="GO" id="GO:0005635">
    <property type="term" value="C:nuclear envelope"/>
    <property type="evidence" value="ECO:0000266"/>
    <property type="project" value="RGD"/>
</dbReference>
<dbReference type="GO" id="GO:0005637">
    <property type="term" value="C:nuclear inner membrane"/>
    <property type="evidence" value="ECO:0000314"/>
    <property type="project" value="RGD"/>
</dbReference>
<dbReference type="GO" id="GO:0005634">
    <property type="term" value="C:nucleus"/>
    <property type="evidence" value="ECO:0000266"/>
    <property type="project" value="RGD"/>
</dbReference>
<dbReference type="GO" id="GO:0003677">
    <property type="term" value="F:DNA binding"/>
    <property type="evidence" value="ECO:0007669"/>
    <property type="project" value="UniProtKB-KW"/>
</dbReference>
<dbReference type="GO" id="GO:0005521">
    <property type="term" value="F:lamin binding"/>
    <property type="evidence" value="ECO:0000304"/>
    <property type="project" value="RGD"/>
</dbReference>
<dbReference type="GO" id="GO:0031468">
    <property type="term" value="P:nuclear membrane reassembly"/>
    <property type="evidence" value="ECO:0000303"/>
    <property type="project" value="RGD"/>
</dbReference>
<dbReference type="GO" id="GO:0006355">
    <property type="term" value="P:regulation of DNA-templated transcription"/>
    <property type="evidence" value="ECO:0000266"/>
    <property type="project" value="RGD"/>
</dbReference>
<dbReference type="CDD" id="cd12940">
    <property type="entry name" value="LEM_LAP2_LEMD1"/>
    <property type="match status" value="1"/>
</dbReference>
<dbReference type="CDD" id="cd12935">
    <property type="entry name" value="LEM_like"/>
    <property type="match status" value="1"/>
</dbReference>
<dbReference type="FunFam" id="1.10.720.40:FF:000002">
    <property type="entry name" value="Thymopoietin isoform alpha"/>
    <property type="match status" value="1"/>
</dbReference>
<dbReference type="FunFam" id="1.10.720.40:FF:000003">
    <property type="entry name" value="thymopoietin isoform X1"/>
    <property type="match status" value="1"/>
</dbReference>
<dbReference type="Gene3D" id="1.10.720.40">
    <property type="match status" value="2"/>
</dbReference>
<dbReference type="InterPro" id="IPR013146">
    <property type="entry name" value="LEM-like_dom"/>
</dbReference>
<dbReference type="InterPro" id="IPR011015">
    <property type="entry name" value="LEM/LEM-like_dom_sf"/>
</dbReference>
<dbReference type="InterPro" id="IPR003887">
    <property type="entry name" value="LEM_dom"/>
</dbReference>
<dbReference type="InterPro" id="IPR051656">
    <property type="entry name" value="LEM_domain"/>
</dbReference>
<dbReference type="PANTHER" id="PTHR12019:SF23">
    <property type="entry name" value="LAMINA-ASSOCIATED POLYPEPTIDE 2, ISOFORM BETA"/>
    <property type="match status" value="1"/>
</dbReference>
<dbReference type="PANTHER" id="PTHR12019">
    <property type="entry name" value="LAMINA-ASSOCIATED POLYPEPTIDE THYMOPOIETIN"/>
    <property type="match status" value="1"/>
</dbReference>
<dbReference type="Pfam" id="PF03020">
    <property type="entry name" value="LEM"/>
    <property type="match status" value="1"/>
</dbReference>
<dbReference type="Pfam" id="PF08198">
    <property type="entry name" value="Thymopoietin"/>
    <property type="match status" value="1"/>
</dbReference>
<dbReference type="SMART" id="SM00540">
    <property type="entry name" value="LEM"/>
    <property type="match status" value="1"/>
</dbReference>
<dbReference type="SMART" id="SM01261">
    <property type="entry name" value="Thymopoietin"/>
    <property type="match status" value="1"/>
</dbReference>
<dbReference type="SUPFAM" id="SSF63451">
    <property type="entry name" value="LEM domain"/>
    <property type="match status" value="2"/>
</dbReference>
<dbReference type="PROSITE" id="PS50954">
    <property type="entry name" value="LEM"/>
    <property type="match status" value="1"/>
</dbReference>
<dbReference type="PROSITE" id="PS50955">
    <property type="entry name" value="LEM_LIKE"/>
    <property type="match status" value="1"/>
</dbReference>
<comment type="function">
    <text>Binds directly to lamin B1 and chromosomes in a mitotic phosphorylation-regulated manner. May play an important role in nuclear envelope reassembly at the end of mitosis and/or anchoring of the nuclear lamina and interphase chromosomes to the nuclear envelope.</text>
</comment>
<comment type="subunit">
    <text evidence="1">Interacts with LMNB1, LMNB2, BANF1, AKAP8L, GMCL and chromosomes.</text>
</comment>
<comment type="subcellular location">
    <subcellularLocation>
        <location>Nucleus inner membrane</location>
        <topology>Single-pass type II membrane protein</topology>
    </subcellularLocation>
    <subcellularLocation>
        <location evidence="1">Chromosome</location>
    </subcellularLocation>
    <text>Tightly associated with the nuclear lamina.</text>
</comment>
<comment type="domain">
    <text evidence="1">Has two structurally independent, non-interacting domains: LEM-like (also called LAP2-N or LEM-D) and LEM (also called LAP2-C or LEM-B). LEM-like binds DNA while LEM interacts with BANF1 (By similarity).</text>
</comment>
<comment type="PTM">
    <text>Mitosis-specific phosphorylation specifically abolishes its binding to lamin B and chromosomes.</text>
</comment>
<comment type="similarity">
    <text evidence="7">Belongs to the LEM family.</text>
</comment>
<feature type="chain" id="PRO_0000206147" description="Lamina-associated polypeptide 2, isoform beta">
    <location>
        <begin position="1"/>
        <end position="452"/>
    </location>
</feature>
<feature type="transmembrane region" description="Helical; Signal-anchor for type II membrane protein" evidence="3">
    <location>
        <begin position="410"/>
        <end position="430"/>
    </location>
</feature>
<feature type="topological domain" description="Lumenal" evidence="3">
    <location>
        <begin position="431"/>
        <end position="452"/>
    </location>
</feature>
<feature type="domain" description="LEM-like" evidence="4 5">
    <location>
        <begin position="5"/>
        <end position="48"/>
    </location>
</feature>
<feature type="domain" description="LEM" evidence="4">
    <location>
        <begin position="108"/>
        <end position="152"/>
    </location>
</feature>
<feature type="region of interest" description="Nucleoplasmic" evidence="3">
    <location>
        <begin position="1"/>
        <end position="409"/>
    </location>
</feature>
<feature type="region of interest" description="Disordered" evidence="6">
    <location>
        <begin position="48"/>
        <end position="113"/>
    </location>
</feature>
<feature type="region of interest" description="Linker">
    <location>
        <begin position="49"/>
        <end position="107"/>
    </location>
</feature>
<feature type="region of interest" description="NAKAP95-binding N">
    <location>
        <begin position="137"/>
        <end position="242"/>
    </location>
</feature>
<feature type="region of interest" description="Disordered" evidence="6">
    <location>
        <begin position="149"/>
        <end position="264"/>
    </location>
</feature>
<feature type="region of interest" description="Binds lamins B">
    <location>
        <begin position="298"/>
        <end position="370"/>
    </location>
</feature>
<feature type="region of interest" description="NAKAP95-binding C">
    <location>
        <begin position="299"/>
        <end position="373"/>
    </location>
</feature>
<feature type="compositionally biased region" description="Basic and acidic residues" evidence="6">
    <location>
        <begin position="96"/>
        <end position="105"/>
    </location>
</feature>
<feature type="compositionally biased region" description="Polar residues" evidence="6">
    <location>
        <begin position="154"/>
        <end position="177"/>
    </location>
</feature>
<feature type="compositionally biased region" description="Basic and acidic residues" evidence="6">
    <location>
        <begin position="178"/>
        <end position="202"/>
    </location>
</feature>
<feature type="modified residue" description="Phosphoserine" evidence="8">
    <location>
        <position position="66"/>
    </location>
</feature>
<feature type="modified residue" description="Phosphoserine" evidence="8">
    <location>
        <position position="67"/>
    </location>
</feature>
<feature type="modified residue" description="Phosphothreonine" evidence="8">
    <location>
        <position position="74"/>
    </location>
</feature>
<feature type="modified residue" description="Phosphoserine" evidence="2">
    <location>
        <position position="82"/>
    </location>
</feature>
<feature type="modified residue" description="Omega-N-methylarginine" evidence="2">
    <location>
        <position position="85"/>
    </location>
</feature>
<feature type="modified residue" description="Omega-N-methylarginine" evidence="2">
    <location>
        <position position="87"/>
    </location>
</feature>
<feature type="modified residue" description="Phosphoserine" evidence="8">
    <location>
        <position position="155"/>
    </location>
</feature>
<feature type="modified residue" description="Phosphoserine" evidence="2">
    <location>
        <position position="158"/>
    </location>
</feature>
<feature type="modified residue" description="Phosphothreonine" evidence="8">
    <location>
        <position position="159"/>
    </location>
</feature>
<feature type="modified residue" description="Phosphoserine" evidence="2">
    <location>
        <position position="165"/>
    </location>
</feature>
<feature type="modified residue" description="Phosphoserine" evidence="8">
    <location>
        <position position="167"/>
    </location>
</feature>
<feature type="modified residue" description="Phosphoserine" evidence="2">
    <location>
        <position position="176"/>
    </location>
</feature>
<feature type="modified residue" description="Phosphoserine" evidence="2">
    <location>
        <position position="179"/>
    </location>
</feature>
<feature type="modified residue" description="Phosphoserine" evidence="8">
    <location>
        <position position="183"/>
    </location>
</feature>
<feature type="modified residue" description="N6-acetyllysine" evidence="2">
    <location>
        <position position="206"/>
    </location>
</feature>
<feature type="modified residue" description="Phosphoserine" evidence="2">
    <location>
        <position position="305"/>
    </location>
</feature>
<feature type="modified residue" description="Phosphoserine" evidence="2">
    <location>
        <position position="306"/>
    </location>
</feature>
<feature type="modified residue" description="Phosphoserine" evidence="2">
    <location>
        <position position="361"/>
    </location>
</feature>
<feature type="modified residue" description="N6-acetyllysine" evidence="2">
    <location>
        <position position="388"/>
    </location>
</feature>
<keyword id="KW-0007">Acetylation</keyword>
<keyword id="KW-0158">Chromosome</keyword>
<keyword id="KW-0903">Direct protein sequencing</keyword>
<keyword id="KW-0238">DNA-binding</keyword>
<keyword id="KW-0472">Membrane</keyword>
<keyword id="KW-0488">Methylation</keyword>
<keyword id="KW-0539">Nucleus</keyword>
<keyword id="KW-0597">Phosphoprotein</keyword>
<keyword id="KW-1185">Reference proteome</keyword>
<keyword id="KW-0735">Signal-anchor</keyword>
<keyword id="KW-0812">Transmembrane</keyword>
<keyword id="KW-1133">Transmembrane helix</keyword>
<accession>Q62733</accession>
<protein>
    <recommendedName>
        <fullName>Lamina-associated polypeptide 2, isoform beta</fullName>
    </recommendedName>
    <alternativeName>
        <fullName>Thymopoietin isoform beta</fullName>
        <shortName>TP beta</shortName>
    </alternativeName>
</protein>